<keyword id="KW-0256">Endoplasmic reticulum</keyword>
<keyword id="KW-0444">Lipid biosynthesis</keyword>
<keyword id="KW-0443">Lipid metabolism</keyword>
<keyword id="KW-0472">Membrane</keyword>
<keyword id="KW-1185">Reference proteome</keyword>
<keyword id="KW-0812">Transmembrane</keyword>
<keyword id="KW-1133">Transmembrane helix</keyword>
<organism>
    <name type="scientific">Oryza sativa subsp. japonica</name>
    <name type="common">Rice</name>
    <dbReference type="NCBI Taxonomy" id="39947"/>
    <lineage>
        <taxon>Eukaryota</taxon>
        <taxon>Viridiplantae</taxon>
        <taxon>Streptophyta</taxon>
        <taxon>Embryophyta</taxon>
        <taxon>Tracheophyta</taxon>
        <taxon>Spermatophyta</taxon>
        <taxon>Magnoliopsida</taxon>
        <taxon>Liliopsida</taxon>
        <taxon>Poales</taxon>
        <taxon>Poaceae</taxon>
        <taxon>BOP clade</taxon>
        <taxon>Oryzoideae</taxon>
        <taxon>Oryzeae</taxon>
        <taxon>Oryzinae</taxon>
        <taxon>Oryza</taxon>
        <taxon>Oryza sativa</taxon>
    </lineage>
</organism>
<comment type="function">
    <text evidence="1">Mediates resistance to sphinganine-analog mycotoxins (SAMs) by restoring the sphingolipid biosynthesis. Could salvage the transport of GPI-anchored proteins from the endoplasmic reticulum to the Golgi apparatus in ceramides-depleted cells after SAM exposure (By similarity).</text>
</comment>
<comment type="subcellular location">
    <subcellularLocation>
        <location evidence="1">Endoplasmic reticulum membrane</location>
        <topology evidence="1">Multi-pass membrane protein</topology>
    </subcellularLocation>
</comment>
<dbReference type="EMBL" id="AC135205">
    <property type="protein sequence ID" value="AAP06825.1"/>
    <property type="molecule type" value="Genomic_DNA"/>
</dbReference>
<dbReference type="EMBL" id="DP000009">
    <property type="protein sequence ID" value="ABF95117.1"/>
    <property type="molecule type" value="Genomic_DNA"/>
</dbReference>
<dbReference type="EMBL" id="AP008209">
    <property type="protein sequence ID" value="BAF11553.1"/>
    <property type="molecule type" value="Genomic_DNA"/>
</dbReference>
<dbReference type="EMBL" id="AP014959">
    <property type="protein sequence ID" value="BAS83386.1"/>
    <property type="molecule type" value="Genomic_DNA"/>
</dbReference>
<dbReference type="EMBL" id="CM000140">
    <property type="protein sequence ID" value="EAZ26356.1"/>
    <property type="molecule type" value="Genomic_DNA"/>
</dbReference>
<dbReference type="EMBL" id="AK101372">
    <property type="protein sequence ID" value="BAG95032.1"/>
    <property type="molecule type" value="mRNA"/>
</dbReference>
<dbReference type="RefSeq" id="XP_015631393.1">
    <property type="nucleotide sequence ID" value="XM_015775907.1"/>
</dbReference>
<dbReference type="SMR" id="Q84QC0"/>
<dbReference type="FunCoup" id="Q84QC0">
    <property type="interactions" value="2891"/>
</dbReference>
<dbReference type="STRING" id="39947.Q84QC0"/>
<dbReference type="PaxDb" id="39947-Q84QC0"/>
<dbReference type="EnsemblPlants" id="Os03t0264000-01">
    <property type="protein sequence ID" value="Os03t0264000-01"/>
    <property type="gene ID" value="Os03g0264000"/>
</dbReference>
<dbReference type="Gramene" id="Os03t0264000-01">
    <property type="protein sequence ID" value="Os03t0264000-01"/>
    <property type="gene ID" value="Os03g0264000"/>
</dbReference>
<dbReference type="KEGG" id="dosa:Os03g0264000"/>
<dbReference type="eggNOG" id="KOG1607">
    <property type="taxonomic scope" value="Eukaryota"/>
</dbReference>
<dbReference type="HOGENOM" id="CLU_028277_5_0_1"/>
<dbReference type="InParanoid" id="Q84QC0"/>
<dbReference type="OMA" id="ESMWKFA"/>
<dbReference type="OrthoDB" id="537032at2759"/>
<dbReference type="PlantReactome" id="R-OSA-1119325">
    <property type="pathway name" value="Sphingolipid metabolism"/>
</dbReference>
<dbReference type="Proteomes" id="UP000000763">
    <property type="component" value="Chromosome 3"/>
</dbReference>
<dbReference type="Proteomes" id="UP000007752">
    <property type="component" value="Chromosome 3"/>
</dbReference>
<dbReference type="Proteomes" id="UP000059680">
    <property type="component" value="Chromosome 3"/>
</dbReference>
<dbReference type="GO" id="GO:0005783">
    <property type="term" value="C:endoplasmic reticulum"/>
    <property type="evidence" value="ECO:0000318"/>
    <property type="project" value="GO_Central"/>
</dbReference>
<dbReference type="GO" id="GO:0005789">
    <property type="term" value="C:endoplasmic reticulum membrane"/>
    <property type="evidence" value="ECO:0007669"/>
    <property type="project" value="UniProtKB-SubCell"/>
</dbReference>
<dbReference type="GO" id="GO:0005794">
    <property type="term" value="C:Golgi apparatus"/>
    <property type="evidence" value="ECO:0007669"/>
    <property type="project" value="EnsemblPlants"/>
</dbReference>
<dbReference type="GO" id="GO:0050291">
    <property type="term" value="F:sphingosine N-acyltransferase activity"/>
    <property type="evidence" value="ECO:0000318"/>
    <property type="project" value="GO_Central"/>
</dbReference>
<dbReference type="GO" id="GO:0046513">
    <property type="term" value="P:ceramide biosynthetic process"/>
    <property type="evidence" value="ECO:0000318"/>
    <property type="project" value="GO_Central"/>
</dbReference>
<dbReference type="GO" id="GO:0042759">
    <property type="term" value="P:long-chain fatty acid biosynthetic process"/>
    <property type="evidence" value="ECO:0007669"/>
    <property type="project" value="EnsemblPlants"/>
</dbReference>
<dbReference type="GO" id="GO:0002238">
    <property type="term" value="P:response to molecule of fungal origin"/>
    <property type="evidence" value="ECO:0007669"/>
    <property type="project" value="EnsemblPlants"/>
</dbReference>
<dbReference type="InterPro" id="IPR016439">
    <property type="entry name" value="Lag1/Lac1-like"/>
</dbReference>
<dbReference type="InterPro" id="IPR006634">
    <property type="entry name" value="TLC-dom"/>
</dbReference>
<dbReference type="PANTHER" id="PTHR12560:SF0">
    <property type="entry name" value="LD18904P"/>
    <property type="match status" value="1"/>
</dbReference>
<dbReference type="PANTHER" id="PTHR12560">
    <property type="entry name" value="LONGEVITY ASSURANCE FACTOR 1 LAG1"/>
    <property type="match status" value="1"/>
</dbReference>
<dbReference type="Pfam" id="PF03798">
    <property type="entry name" value="TRAM_LAG1_CLN8"/>
    <property type="match status" value="1"/>
</dbReference>
<dbReference type="PIRSF" id="PIRSF005225">
    <property type="entry name" value="LAG1_LAC1"/>
    <property type="match status" value="1"/>
</dbReference>
<dbReference type="SMART" id="SM00724">
    <property type="entry name" value="TLC"/>
    <property type="match status" value="1"/>
</dbReference>
<dbReference type="PROSITE" id="PS50922">
    <property type="entry name" value="TLC"/>
    <property type="match status" value="1"/>
</dbReference>
<sequence>MAIRGPEASSFFPLTLVFSVGFFCARFFLDRLVYKPLAAYCFSSKASKLMNDEVRQAKIVKFSESIWKLTYYGSVQAWVLLIIKQEPWSLDTMQYFEGWPNQYMTSSLMLFYMCQCGFYIYSIFALVAWETRRKDFAVMMSHHVVTSILIGYAYLTGFFRIGTIILALHDASDVFLETAKLCKYTEKELGASLFFGLFALSWLLLRLIYFPFWIIKTSSYQSIISLRKLEKFPTTLYYIFNTMLLTLLVFHIYWWKLICLMIMKQLNNKGQVGEDVRSDSEDEE</sequence>
<feature type="chain" id="PRO_0000185525" description="ASC1-like protein 3">
    <location>
        <begin position="1"/>
        <end position="284"/>
    </location>
</feature>
<feature type="transmembrane region" description="Helical" evidence="2">
    <location>
        <begin position="9"/>
        <end position="29"/>
    </location>
</feature>
<feature type="transmembrane region" description="Helical" evidence="2">
    <location>
        <begin position="69"/>
        <end position="89"/>
    </location>
</feature>
<feature type="transmembrane region" description="Helical" evidence="2">
    <location>
        <begin position="108"/>
        <end position="128"/>
    </location>
</feature>
<feature type="transmembrane region" description="Helical" evidence="2">
    <location>
        <begin position="148"/>
        <end position="168"/>
    </location>
</feature>
<feature type="transmembrane region" description="Helical" evidence="2">
    <location>
        <begin position="195"/>
        <end position="215"/>
    </location>
</feature>
<feature type="transmembrane region" description="Helical" evidence="2">
    <location>
        <begin position="243"/>
        <end position="263"/>
    </location>
</feature>
<feature type="domain" description="TLC" evidence="3">
    <location>
        <begin position="60"/>
        <end position="267"/>
    </location>
</feature>
<protein>
    <recommendedName>
        <fullName>ASC1-like protein 3</fullName>
    </recommendedName>
    <alternativeName>
        <fullName>Alternaria stem canker resistance-like protein 3</fullName>
    </alternativeName>
</protein>
<name>ASCL3_ORYSJ</name>
<reference key="1">
    <citation type="journal article" date="2005" name="Genome Res.">
        <title>Sequence, annotation, and analysis of synteny between rice chromosome 3 and diverged grass species.</title>
        <authorList>
            <consortium name="The rice chromosome 3 sequencing consortium"/>
            <person name="Buell C.R."/>
            <person name="Yuan Q."/>
            <person name="Ouyang S."/>
            <person name="Liu J."/>
            <person name="Zhu W."/>
            <person name="Wang A."/>
            <person name="Maiti R."/>
            <person name="Haas B."/>
            <person name="Wortman J."/>
            <person name="Pertea M."/>
            <person name="Jones K.M."/>
            <person name="Kim M."/>
            <person name="Overton L."/>
            <person name="Tsitrin T."/>
            <person name="Fadrosh D."/>
            <person name="Bera J."/>
            <person name="Weaver B."/>
            <person name="Jin S."/>
            <person name="Johri S."/>
            <person name="Reardon M."/>
            <person name="Webb K."/>
            <person name="Hill J."/>
            <person name="Moffat K."/>
            <person name="Tallon L."/>
            <person name="Van Aken S."/>
            <person name="Lewis M."/>
            <person name="Utterback T."/>
            <person name="Feldblyum T."/>
            <person name="Zismann V."/>
            <person name="Iobst S."/>
            <person name="Hsiao J."/>
            <person name="de Vazeille A.R."/>
            <person name="Salzberg S.L."/>
            <person name="White O."/>
            <person name="Fraser C.M."/>
            <person name="Yu Y."/>
            <person name="Kim H."/>
            <person name="Rambo T."/>
            <person name="Currie J."/>
            <person name="Collura K."/>
            <person name="Kernodle-Thompson S."/>
            <person name="Wei F."/>
            <person name="Kudrna K."/>
            <person name="Ammiraju J.S.S."/>
            <person name="Luo M."/>
            <person name="Goicoechea J.L."/>
            <person name="Wing R.A."/>
            <person name="Henry D."/>
            <person name="Oates R."/>
            <person name="Palmer M."/>
            <person name="Pries G."/>
            <person name="Saski C."/>
            <person name="Simmons J."/>
            <person name="Soderlund C."/>
            <person name="Nelson W."/>
            <person name="de la Bastide M."/>
            <person name="Spiegel L."/>
            <person name="Nascimento L."/>
            <person name="Huang E."/>
            <person name="Preston R."/>
            <person name="Zutavern T."/>
            <person name="Palmer L."/>
            <person name="O'Shaughnessy A."/>
            <person name="Dike S."/>
            <person name="McCombie W.R."/>
            <person name="Minx P."/>
            <person name="Cordum H."/>
            <person name="Wilson R."/>
            <person name="Jin W."/>
            <person name="Lee H.R."/>
            <person name="Jiang J."/>
            <person name="Jackson S."/>
        </authorList>
    </citation>
    <scope>NUCLEOTIDE SEQUENCE [LARGE SCALE GENOMIC DNA]</scope>
    <source>
        <strain>cv. Nipponbare</strain>
    </source>
</reference>
<reference key="2">
    <citation type="journal article" date="2005" name="Nature">
        <title>The map-based sequence of the rice genome.</title>
        <authorList>
            <consortium name="International rice genome sequencing project (IRGSP)"/>
        </authorList>
    </citation>
    <scope>NUCLEOTIDE SEQUENCE [LARGE SCALE GENOMIC DNA]</scope>
    <source>
        <strain>cv. Nipponbare</strain>
    </source>
</reference>
<reference key="3">
    <citation type="journal article" date="2008" name="Nucleic Acids Res.">
        <title>The rice annotation project database (RAP-DB): 2008 update.</title>
        <authorList>
            <consortium name="The rice annotation project (RAP)"/>
        </authorList>
    </citation>
    <scope>GENOME REANNOTATION</scope>
    <source>
        <strain>cv. Nipponbare</strain>
    </source>
</reference>
<reference key="4">
    <citation type="journal article" date="2013" name="Rice">
        <title>Improvement of the Oryza sativa Nipponbare reference genome using next generation sequence and optical map data.</title>
        <authorList>
            <person name="Kawahara Y."/>
            <person name="de la Bastide M."/>
            <person name="Hamilton J.P."/>
            <person name="Kanamori H."/>
            <person name="McCombie W.R."/>
            <person name="Ouyang S."/>
            <person name="Schwartz D.C."/>
            <person name="Tanaka T."/>
            <person name="Wu J."/>
            <person name="Zhou S."/>
            <person name="Childs K.L."/>
            <person name="Davidson R.M."/>
            <person name="Lin H."/>
            <person name="Quesada-Ocampo L."/>
            <person name="Vaillancourt B."/>
            <person name="Sakai H."/>
            <person name="Lee S.S."/>
            <person name="Kim J."/>
            <person name="Numa H."/>
            <person name="Itoh T."/>
            <person name="Buell C.R."/>
            <person name="Matsumoto T."/>
        </authorList>
    </citation>
    <scope>GENOME REANNOTATION</scope>
    <source>
        <strain>cv. Nipponbare</strain>
    </source>
</reference>
<reference key="5">
    <citation type="journal article" date="2005" name="PLoS Biol.">
        <title>The genomes of Oryza sativa: a history of duplications.</title>
        <authorList>
            <person name="Yu J."/>
            <person name="Wang J."/>
            <person name="Lin W."/>
            <person name="Li S."/>
            <person name="Li H."/>
            <person name="Zhou J."/>
            <person name="Ni P."/>
            <person name="Dong W."/>
            <person name="Hu S."/>
            <person name="Zeng C."/>
            <person name="Zhang J."/>
            <person name="Zhang Y."/>
            <person name="Li R."/>
            <person name="Xu Z."/>
            <person name="Li S."/>
            <person name="Li X."/>
            <person name="Zheng H."/>
            <person name="Cong L."/>
            <person name="Lin L."/>
            <person name="Yin J."/>
            <person name="Geng J."/>
            <person name="Li G."/>
            <person name="Shi J."/>
            <person name="Liu J."/>
            <person name="Lv H."/>
            <person name="Li J."/>
            <person name="Wang J."/>
            <person name="Deng Y."/>
            <person name="Ran L."/>
            <person name="Shi X."/>
            <person name="Wang X."/>
            <person name="Wu Q."/>
            <person name="Li C."/>
            <person name="Ren X."/>
            <person name="Wang J."/>
            <person name="Wang X."/>
            <person name="Li D."/>
            <person name="Liu D."/>
            <person name="Zhang X."/>
            <person name="Ji Z."/>
            <person name="Zhao W."/>
            <person name="Sun Y."/>
            <person name="Zhang Z."/>
            <person name="Bao J."/>
            <person name="Han Y."/>
            <person name="Dong L."/>
            <person name="Ji J."/>
            <person name="Chen P."/>
            <person name="Wu S."/>
            <person name="Liu J."/>
            <person name="Xiao Y."/>
            <person name="Bu D."/>
            <person name="Tan J."/>
            <person name="Yang L."/>
            <person name="Ye C."/>
            <person name="Zhang J."/>
            <person name="Xu J."/>
            <person name="Zhou Y."/>
            <person name="Yu Y."/>
            <person name="Zhang B."/>
            <person name="Zhuang S."/>
            <person name="Wei H."/>
            <person name="Liu B."/>
            <person name="Lei M."/>
            <person name="Yu H."/>
            <person name="Li Y."/>
            <person name="Xu H."/>
            <person name="Wei S."/>
            <person name="He X."/>
            <person name="Fang L."/>
            <person name="Zhang Z."/>
            <person name="Zhang Y."/>
            <person name="Huang X."/>
            <person name="Su Z."/>
            <person name="Tong W."/>
            <person name="Li J."/>
            <person name="Tong Z."/>
            <person name="Li S."/>
            <person name="Ye J."/>
            <person name="Wang L."/>
            <person name="Fang L."/>
            <person name="Lei T."/>
            <person name="Chen C.-S."/>
            <person name="Chen H.-C."/>
            <person name="Xu Z."/>
            <person name="Li H."/>
            <person name="Huang H."/>
            <person name="Zhang F."/>
            <person name="Xu H."/>
            <person name="Li N."/>
            <person name="Zhao C."/>
            <person name="Li S."/>
            <person name="Dong L."/>
            <person name="Huang Y."/>
            <person name="Li L."/>
            <person name="Xi Y."/>
            <person name="Qi Q."/>
            <person name="Li W."/>
            <person name="Zhang B."/>
            <person name="Hu W."/>
            <person name="Zhang Y."/>
            <person name="Tian X."/>
            <person name="Jiao Y."/>
            <person name="Liang X."/>
            <person name="Jin J."/>
            <person name="Gao L."/>
            <person name="Zheng W."/>
            <person name="Hao B."/>
            <person name="Liu S.-M."/>
            <person name="Wang W."/>
            <person name="Yuan L."/>
            <person name="Cao M."/>
            <person name="McDermott J."/>
            <person name="Samudrala R."/>
            <person name="Wang J."/>
            <person name="Wong G.K.-S."/>
            <person name="Yang H."/>
        </authorList>
    </citation>
    <scope>NUCLEOTIDE SEQUENCE [LARGE SCALE GENOMIC DNA]</scope>
    <source>
        <strain>cv. Nipponbare</strain>
    </source>
</reference>
<reference key="6">
    <citation type="journal article" date="2003" name="Science">
        <title>Collection, mapping, and annotation of over 28,000 cDNA clones from japonica rice.</title>
        <authorList>
            <consortium name="The rice full-length cDNA consortium"/>
        </authorList>
    </citation>
    <scope>NUCLEOTIDE SEQUENCE [LARGE SCALE MRNA]</scope>
    <source>
        <strain>cv. Nipponbare</strain>
    </source>
</reference>
<gene>
    <name type="ordered locus">Os03g0264000</name>
    <name type="ordered locus">LOC_Os03g15750</name>
    <name type="ORF">OJ1012B02.1</name>
    <name evidence="4" type="ORF">OsJ_10237</name>
</gene>
<evidence type="ECO:0000250" key="1"/>
<evidence type="ECO:0000255" key="2"/>
<evidence type="ECO:0000255" key="3">
    <source>
        <dbReference type="PROSITE-ProRule" id="PRU00205"/>
    </source>
</evidence>
<evidence type="ECO:0000312" key="4">
    <source>
        <dbReference type="EMBL" id="EAZ26356.1"/>
    </source>
</evidence>
<accession>Q84QC0</accession>
<accession>Q10NP1</accession>
<proteinExistence type="evidence at transcript level"/>